<reference key="1">
    <citation type="journal article" date="2009" name="PLoS Genet.">
        <title>Organised genome dynamics in the Escherichia coli species results in highly diverse adaptive paths.</title>
        <authorList>
            <person name="Touchon M."/>
            <person name="Hoede C."/>
            <person name="Tenaillon O."/>
            <person name="Barbe V."/>
            <person name="Baeriswyl S."/>
            <person name="Bidet P."/>
            <person name="Bingen E."/>
            <person name="Bonacorsi S."/>
            <person name="Bouchier C."/>
            <person name="Bouvet O."/>
            <person name="Calteau A."/>
            <person name="Chiapello H."/>
            <person name="Clermont O."/>
            <person name="Cruveiller S."/>
            <person name="Danchin A."/>
            <person name="Diard M."/>
            <person name="Dossat C."/>
            <person name="Karoui M.E."/>
            <person name="Frapy E."/>
            <person name="Garry L."/>
            <person name="Ghigo J.M."/>
            <person name="Gilles A.M."/>
            <person name="Johnson J."/>
            <person name="Le Bouguenec C."/>
            <person name="Lescat M."/>
            <person name="Mangenot S."/>
            <person name="Martinez-Jehanne V."/>
            <person name="Matic I."/>
            <person name="Nassif X."/>
            <person name="Oztas S."/>
            <person name="Petit M.A."/>
            <person name="Pichon C."/>
            <person name="Rouy Z."/>
            <person name="Ruf C.S."/>
            <person name="Schneider D."/>
            <person name="Tourret J."/>
            <person name="Vacherie B."/>
            <person name="Vallenet D."/>
            <person name="Medigue C."/>
            <person name="Rocha E.P.C."/>
            <person name="Denamur E."/>
        </authorList>
    </citation>
    <scope>NUCLEOTIDE SEQUENCE [LARGE SCALE GENOMIC DNA]</scope>
    <source>
        <strain>IAI1</strain>
    </source>
</reference>
<organism>
    <name type="scientific">Escherichia coli O8 (strain IAI1)</name>
    <dbReference type="NCBI Taxonomy" id="585034"/>
    <lineage>
        <taxon>Bacteria</taxon>
        <taxon>Pseudomonadati</taxon>
        <taxon>Pseudomonadota</taxon>
        <taxon>Gammaproteobacteria</taxon>
        <taxon>Enterobacterales</taxon>
        <taxon>Enterobacteriaceae</taxon>
        <taxon>Escherichia</taxon>
    </lineage>
</organism>
<keyword id="KW-0456">Lyase</keyword>
<keyword id="KW-0460">Magnesium</keyword>
<keyword id="KW-0474">Menaquinone biosynthesis</keyword>
<keyword id="KW-0479">Metal-binding</keyword>
<protein>
    <recommendedName>
        <fullName evidence="1">o-succinylbenzoate synthase</fullName>
        <shortName evidence="1">OSB synthase</shortName>
        <shortName evidence="1">OSBS</shortName>
        <ecNumber evidence="1">4.2.1.113</ecNumber>
    </recommendedName>
    <alternativeName>
        <fullName evidence="1">4-(2'-carboxyphenyl)-4-oxybutyric acid synthase</fullName>
    </alternativeName>
    <alternativeName>
        <fullName evidence="1">o-succinylbenzoic acid synthase</fullName>
    </alternativeName>
</protein>
<dbReference type="EC" id="4.2.1.113" evidence="1"/>
<dbReference type="EMBL" id="CU928160">
    <property type="protein sequence ID" value="CAQ99181.1"/>
    <property type="molecule type" value="Genomic_DNA"/>
</dbReference>
<dbReference type="RefSeq" id="WP_001255609.1">
    <property type="nucleotide sequence ID" value="NC_011741.1"/>
</dbReference>
<dbReference type="SMR" id="B7M5U4"/>
<dbReference type="GeneID" id="75205688"/>
<dbReference type="KEGG" id="ecr:ECIAI1_2339"/>
<dbReference type="HOGENOM" id="CLU_030273_0_1_6"/>
<dbReference type="UniPathway" id="UPA00079"/>
<dbReference type="UniPathway" id="UPA01057">
    <property type="reaction ID" value="UER00165"/>
</dbReference>
<dbReference type="GO" id="GO:0000287">
    <property type="term" value="F:magnesium ion binding"/>
    <property type="evidence" value="ECO:0007669"/>
    <property type="project" value="UniProtKB-UniRule"/>
</dbReference>
<dbReference type="GO" id="GO:0043748">
    <property type="term" value="F:O-succinylbenzoate synthase activity"/>
    <property type="evidence" value="ECO:0007669"/>
    <property type="project" value="UniProtKB-EC"/>
</dbReference>
<dbReference type="GO" id="GO:0009234">
    <property type="term" value="P:menaquinone biosynthetic process"/>
    <property type="evidence" value="ECO:0007669"/>
    <property type="project" value="UniProtKB-UniRule"/>
</dbReference>
<dbReference type="CDD" id="cd03320">
    <property type="entry name" value="OSBS"/>
    <property type="match status" value="1"/>
</dbReference>
<dbReference type="FunFam" id="3.20.20.120:FF:000006">
    <property type="entry name" value="o-succinylbenzoate synthase"/>
    <property type="match status" value="1"/>
</dbReference>
<dbReference type="FunFam" id="3.30.390.10:FF:000005">
    <property type="entry name" value="o-succinylbenzoate synthase"/>
    <property type="match status" value="1"/>
</dbReference>
<dbReference type="Gene3D" id="3.20.20.120">
    <property type="entry name" value="Enolase-like C-terminal domain"/>
    <property type="match status" value="1"/>
</dbReference>
<dbReference type="Gene3D" id="3.30.390.10">
    <property type="entry name" value="Enolase-like, N-terminal domain"/>
    <property type="match status" value="1"/>
</dbReference>
<dbReference type="HAMAP" id="MF_00470">
    <property type="entry name" value="MenC_1"/>
    <property type="match status" value="1"/>
</dbReference>
<dbReference type="InterPro" id="IPR036849">
    <property type="entry name" value="Enolase-like_C_sf"/>
</dbReference>
<dbReference type="InterPro" id="IPR029017">
    <property type="entry name" value="Enolase-like_N"/>
</dbReference>
<dbReference type="InterPro" id="IPR029065">
    <property type="entry name" value="Enolase_C-like"/>
</dbReference>
<dbReference type="InterPro" id="IPR013342">
    <property type="entry name" value="Mandelate_racemase_C"/>
</dbReference>
<dbReference type="InterPro" id="IPR010196">
    <property type="entry name" value="OSB_synthase_MenC1"/>
</dbReference>
<dbReference type="InterPro" id="IPR041338">
    <property type="entry name" value="OSBS_N"/>
</dbReference>
<dbReference type="NCBIfam" id="TIGR01927">
    <property type="entry name" value="menC_gam_Gplu"/>
    <property type="match status" value="1"/>
</dbReference>
<dbReference type="NCBIfam" id="NF003473">
    <property type="entry name" value="PRK05105.1"/>
    <property type="match status" value="1"/>
</dbReference>
<dbReference type="PANTHER" id="PTHR48073:SF2">
    <property type="entry name" value="O-SUCCINYLBENZOATE SYNTHASE"/>
    <property type="match status" value="1"/>
</dbReference>
<dbReference type="PANTHER" id="PTHR48073">
    <property type="entry name" value="O-SUCCINYLBENZOATE SYNTHASE-RELATED"/>
    <property type="match status" value="1"/>
</dbReference>
<dbReference type="Pfam" id="PF21508">
    <property type="entry name" value="MenC_N"/>
    <property type="match status" value="1"/>
</dbReference>
<dbReference type="Pfam" id="PF13378">
    <property type="entry name" value="MR_MLE_C"/>
    <property type="match status" value="1"/>
</dbReference>
<dbReference type="SFLD" id="SFLDS00001">
    <property type="entry name" value="Enolase"/>
    <property type="match status" value="1"/>
</dbReference>
<dbReference type="SFLD" id="SFLDF00009">
    <property type="entry name" value="o-succinylbenzoate_synthase"/>
    <property type="match status" value="1"/>
</dbReference>
<dbReference type="SMART" id="SM00922">
    <property type="entry name" value="MR_MLE"/>
    <property type="match status" value="1"/>
</dbReference>
<dbReference type="SUPFAM" id="SSF51604">
    <property type="entry name" value="Enolase C-terminal domain-like"/>
    <property type="match status" value="1"/>
</dbReference>
<dbReference type="SUPFAM" id="SSF54826">
    <property type="entry name" value="Enolase N-terminal domain-like"/>
    <property type="match status" value="1"/>
</dbReference>
<evidence type="ECO:0000255" key="1">
    <source>
        <dbReference type="HAMAP-Rule" id="MF_00470"/>
    </source>
</evidence>
<name>MENC_ECO8A</name>
<sequence>MRSAQVYRWQIPMDAGVVLRDRRLKTRDGLYVCLREGEREGWGEISPLPGFSQETWEEAQSVLLAWVNNWLAGDCELPQMPSVAFGVSCALAELADTLPQAANYRAAPLCNGDPDDLILKLADMPGEKVAKVKVGLYEAVRDGMVVNLLLEAIPDLHLRLDANRAWTPLKGQQFAKYVNPDYRHRIAFLEEPCKTRDDSRAFARETGIAIAWDESLREPDFAFVAEEGVRAVVIKPTLTGSLEKVREQVQAAHALGLTAVISSSIESSLGLTQLARIAAWLTPDTIPGLDTLDLMQAQQVRRWPGSTLPVVEVDALERLL</sequence>
<comment type="function">
    <text evidence="1">Converts 2-succinyl-6-hydroxy-2,4-cyclohexadiene-1-carboxylate (SHCHC) to 2-succinylbenzoate (OSB).</text>
</comment>
<comment type="catalytic activity">
    <reaction evidence="1">
        <text>(1R,6R)-6-hydroxy-2-succinyl-cyclohexa-2,4-diene-1-carboxylate = 2-succinylbenzoate + H2O</text>
        <dbReference type="Rhea" id="RHEA:10196"/>
        <dbReference type="ChEBI" id="CHEBI:15377"/>
        <dbReference type="ChEBI" id="CHEBI:18325"/>
        <dbReference type="ChEBI" id="CHEBI:58689"/>
        <dbReference type="EC" id="4.2.1.113"/>
    </reaction>
</comment>
<comment type="cofactor">
    <cofactor evidence="1">
        <name>a divalent metal cation</name>
        <dbReference type="ChEBI" id="CHEBI:60240"/>
    </cofactor>
</comment>
<comment type="pathway">
    <text evidence="1">Quinol/quinone metabolism; 1,4-dihydroxy-2-naphthoate biosynthesis; 1,4-dihydroxy-2-naphthoate from chorismate: step 4/7.</text>
</comment>
<comment type="pathway">
    <text evidence="1">Quinol/quinone metabolism; menaquinone biosynthesis.</text>
</comment>
<comment type="similarity">
    <text evidence="1">Belongs to the mandelate racemase/muconate lactonizing enzyme family. MenC type 1 subfamily.</text>
</comment>
<gene>
    <name evidence="1" type="primary">menC</name>
    <name type="ordered locus">ECIAI1_2339</name>
</gene>
<proteinExistence type="inferred from homology"/>
<feature type="chain" id="PRO_1000125569" description="o-succinylbenzoate synthase">
    <location>
        <begin position="1"/>
        <end position="320"/>
    </location>
</feature>
<feature type="active site" description="Proton donor" evidence="1">
    <location>
        <position position="133"/>
    </location>
</feature>
<feature type="active site" description="Proton acceptor" evidence="1">
    <location>
        <position position="235"/>
    </location>
</feature>
<feature type="binding site" evidence="1">
    <location>
        <position position="161"/>
    </location>
    <ligand>
        <name>Mg(2+)</name>
        <dbReference type="ChEBI" id="CHEBI:18420"/>
    </ligand>
</feature>
<feature type="binding site" evidence="1">
    <location>
        <position position="190"/>
    </location>
    <ligand>
        <name>Mg(2+)</name>
        <dbReference type="ChEBI" id="CHEBI:18420"/>
    </ligand>
</feature>
<feature type="binding site" evidence="1">
    <location>
        <position position="213"/>
    </location>
    <ligand>
        <name>Mg(2+)</name>
        <dbReference type="ChEBI" id="CHEBI:18420"/>
    </ligand>
</feature>
<accession>B7M5U4</accession>